<feature type="chain" id="PRO_0000315095" description="UDP-N-acetylglucosamine--N-acetylmuramyl-(pentapeptide) pyrophosphoryl-undecaprenol N-acetylglucosamine transferase">
    <location>
        <begin position="1"/>
        <end position="376"/>
    </location>
</feature>
<feature type="binding site" evidence="1">
    <location>
        <begin position="12"/>
        <end position="14"/>
    </location>
    <ligand>
        <name>UDP-N-acetyl-alpha-D-glucosamine</name>
        <dbReference type="ChEBI" id="CHEBI:57705"/>
    </ligand>
</feature>
<feature type="binding site" evidence="1">
    <location>
        <position position="126"/>
    </location>
    <ligand>
        <name>UDP-N-acetyl-alpha-D-glucosamine</name>
        <dbReference type="ChEBI" id="CHEBI:57705"/>
    </ligand>
</feature>
<feature type="binding site" evidence="1">
    <location>
        <position position="163"/>
    </location>
    <ligand>
        <name>UDP-N-acetyl-alpha-D-glucosamine</name>
        <dbReference type="ChEBI" id="CHEBI:57705"/>
    </ligand>
</feature>
<feature type="binding site" evidence="1">
    <location>
        <position position="198"/>
    </location>
    <ligand>
        <name>UDP-N-acetyl-alpha-D-glucosamine</name>
        <dbReference type="ChEBI" id="CHEBI:57705"/>
    </ligand>
</feature>
<feature type="binding site" evidence="1">
    <location>
        <position position="296"/>
    </location>
    <ligand>
        <name>UDP-N-acetyl-alpha-D-glucosamine</name>
        <dbReference type="ChEBI" id="CHEBI:57705"/>
    </ligand>
</feature>
<sequence>MLRSVVLAGGGTAGHVEPALAVADALRATDSRVRLTLLGTATGLEARLVPARGHELATVPKVPMPRRPTPAVFKLPARFLDAICQAGETLDLVRADVVVGFGGYVSAPAYLAARRRGIPIVVHEANPLPGLANRLGARLTPFVATSYPSTPLRGATLTGIPLRGEILTLDRSPAAMRAARARYGLDPHRPTLLVFGGSQGARSLNQVMTAAAHPLAAAGIQVLHATGPKNFDEVAAALPLDLPTPYELRPYLDHIPSAYAAADMTLCRSGAMTCAELAAAGLPAVYVPLPHGNGEQRRNALPTVEAGGGLLVDDAELSASWLLENALPVLISAERLAKMSAACAGSGHPQAAAAIVAMIRDAAATRRRSRPRHAAP</sequence>
<accession>Q2JD50</accession>
<dbReference type="EC" id="2.4.1.227" evidence="1"/>
<dbReference type="EMBL" id="CP000249">
    <property type="protein sequence ID" value="ABD10792.1"/>
    <property type="molecule type" value="Genomic_DNA"/>
</dbReference>
<dbReference type="RefSeq" id="WP_011435857.1">
    <property type="nucleotide sequence ID" value="NZ_MSEA01000605.1"/>
</dbReference>
<dbReference type="SMR" id="Q2JD50"/>
<dbReference type="STRING" id="106370.Francci3_1415"/>
<dbReference type="CAZy" id="GT28">
    <property type="family name" value="Glycosyltransferase Family 28"/>
</dbReference>
<dbReference type="KEGG" id="fra:Francci3_1415"/>
<dbReference type="eggNOG" id="COG0707">
    <property type="taxonomic scope" value="Bacteria"/>
</dbReference>
<dbReference type="HOGENOM" id="CLU_037404_1_0_11"/>
<dbReference type="OrthoDB" id="9808936at2"/>
<dbReference type="PhylomeDB" id="Q2JD50"/>
<dbReference type="UniPathway" id="UPA00219"/>
<dbReference type="Proteomes" id="UP000001937">
    <property type="component" value="Chromosome"/>
</dbReference>
<dbReference type="GO" id="GO:0005886">
    <property type="term" value="C:plasma membrane"/>
    <property type="evidence" value="ECO:0007669"/>
    <property type="project" value="UniProtKB-SubCell"/>
</dbReference>
<dbReference type="GO" id="GO:0051991">
    <property type="term" value="F:UDP-N-acetyl-D-glucosamine:N-acetylmuramoyl-L-alanyl-D-glutamyl-meso-2,6-diaminopimelyl-D-alanyl-D-alanine-diphosphoundecaprenol 4-beta-N-acetylglucosaminlytransferase activity"/>
    <property type="evidence" value="ECO:0007669"/>
    <property type="project" value="RHEA"/>
</dbReference>
<dbReference type="GO" id="GO:0050511">
    <property type="term" value="F:undecaprenyldiphospho-muramoylpentapeptide beta-N-acetylglucosaminyltransferase activity"/>
    <property type="evidence" value="ECO:0007669"/>
    <property type="project" value="UniProtKB-UniRule"/>
</dbReference>
<dbReference type="GO" id="GO:0005975">
    <property type="term" value="P:carbohydrate metabolic process"/>
    <property type="evidence" value="ECO:0007669"/>
    <property type="project" value="InterPro"/>
</dbReference>
<dbReference type="GO" id="GO:0051301">
    <property type="term" value="P:cell division"/>
    <property type="evidence" value="ECO:0007669"/>
    <property type="project" value="UniProtKB-KW"/>
</dbReference>
<dbReference type="GO" id="GO:0071555">
    <property type="term" value="P:cell wall organization"/>
    <property type="evidence" value="ECO:0007669"/>
    <property type="project" value="UniProtKB-KW"/>
</dbReference>
<dbReference type="GO" id="GO:0030259">
    <property type="term" value="P:lipid glycosylation"/>
    <property type="evidence" value="ECO:0007669"/>
    <property type="project" value="UniProtKB-UniRule"/>
</dbReference>
<dbReference type="GO" id="GO:0009252">
    <property type="term" value="P:peptidoglycan biosynthetic process"/>
    <property type="evidence" value="ECO:0007669"/>
    <property type="project" value="UniProtKB-UniRule"/>
</dbReference>
<dbReference type="GO" id="GO:0008360">
    <property type="term" value="P:regulation of cell shape"/>
    <property type="evidence" value="ECO:0007669"/>
    <property type="project" value="UniProtKB-KW"/>
</dbReference>
<dbReference type="CDD" id="cd03785">
    <property type="entry name" value="GT28_MurG"/>
    <property type="match status" value="1"/>
</dbReference>
<dbReference type="Gene3D" id="3.40.50.2000">
    <property type="entry name" value="Glycogen Phosphorylase B"/>
    <property type="match status" value="2"/>
</dbReference>
<dbReference type="HAMAP" id="MF_00033">
    <property type="entry name" value="MurG"/>
    <property type="match status" value="1"/>
</dbReference>
<dbReference type="InterPro" id="IPR006009">
    <property type="entry name" value="GlcNAc_MurG"/>
</dbReference>
<dbReference type="InterPro" id="IPR007235">
    <property type="entry name" value="Glyco_trans_28_C"/>
</dbReference>
<dbReference type="InterPro" id="IPR004276">
    <property type="entry name" value="GlycoTrans_28_N"/>
</dbReference>
<dbReference type="NCBIfam" id="TIGR01133">
    <property type="entry name" value="murG"/>
    <property type="match status" value="1"/>
</dbReference>
<dbReference type="PANTHER" id="PTHR21015:SF22">
    <property type="entry name" value="GLYCOSYLTRANSFERASE"/>
    <property type="match status" value="1"/>
</dbReference>
<dbReference type="PANTHER" id="PTHR21015">
    <property type="entry name" value="UDP-N-ACETYLGLUCOSAMINE--N-ACETYLMURAMYL-(PENTAPEPTIDE) PYROPHOSPHORYL-UNDECAPRENOL N-ACETYLGLUCOSAMINE TRANSFERASE 1"/>
    <property type="match status" value="1"/>
</dbReference>
<dbReference type="Pfam" id="PF04101">
    <property type="entry name" value="Glyco_tran_28_C"/>
    <property type="match status" value="1"/>
</dbReference>
<dbReference type="Pfam" id="PF03033">
    <property type="entry name" value="Glyco_transf_28"/>
    <property type="match status" value="1"/>
</dbReference>
<dbReference type="SUPFAM" id="SSF53756">
    <property type="entry name" value="UDP-Glycosyltransferase/glycogen phosphorylase"/>
    <property type="match status" value="1"/>
</dbReference>
<proteinExistence type="inferred from homology"/>
<name>MURG_FRACC</name>
<gene>
    <name evidence="1" type="primary">murG</name>
    <name type="ordered locus">Francci3_1415</name>
</gene>
<comment type="function">
    <text evidence="1">Cell wall formation. Catalyzes the transfer of a GlcNAc subunit on undecaprenyl-pyrophosphoryl-MurNAc-pentapeptide (lipid intermediate I) to form undecaprenyl-pyrophosphoryl-MurNAc-(pentapeptide)GlcNAc (lipid intermediate II).</text>
</comment>
<comment type="catalytic activity">
    <reaction evidence="1">
        <text>di-trans,octa-cis-undecaprenyl diphospho-N-acetyl-alpha-D-muramoyl-L-alanyl-D-glutamyl-meso-2,6-diaminopimeloyl-D-alanyl-D-alanine + UDP-N-acetyl-alpha-D-glucosamine = di-trans,octa-cis-undecaprenyl diphospho-[N-acetyl-alpha-D-glucosaminyl-(1-&gt;4)]-N-acetyl-alpha-D-muramoyl-L-alanyl-D-glutamyl-meso-2,6-diaminopimeloyl-D-alanyl-D-alanine + UDP + H(+)</text>
        <dbReference type="Rhea" id="RHEA:31227"/>
        <dbReference type="ChEBI" id="CHEBI:15378"/>
        <dbReference type="ChEBI" id="CHEBI:57705"/>
        <dbReference type="ChEBI" id="CHEBI:58223"/>
        <dbReference type="ChEBI" id="CHEBI:61387"/>
        <dbReference type="ChEBI" id="CHEBI:61388"/>
        <dbReference type="EC" id="2.4.1.227"/>
    </reaction>
</comment>
<comment type="pathway">
    <text evidence="1">Cell wall biogenesis; peptidoglycan biosynthesis.</text>
</comment>
<comment type="subcellular location">
    <subcellularLocation>
        <location evidence="1">Cell membrane</location>
        <topology evidence="1">Peripheral membrane protein</topology>
        <orientation evidence="1">Cytoplasmic side</orientation>
    </subcellularLocation>
</comment>
<comment type="similarity">
    <text evidence="1">Belongs to the glycosyltransferase 28 family. MurG subfamily.</text>
</comment>
<protein>
    <recommendedName>
        <fullName evidence="1">UDP-N-acetylglucosamine--N-acetylmuramyl-(pentapeptide) pyrophosphoryl-undecaprenol N-acetylglucosamine transferase</fullName>
        <ecNumber evidence="1">2.4.1.227</ecNumber>
    </recommendedName>
    <alternativeName>
        <fullName evidence="1">Undecaprenyl-PP-MurNAc-pentapeptide-UDPGlcNAc GlcNAc transferase</fullName>
    </alternativeName>
</protein>
<reference key="1">
    <citation type="journal article" date="2007" name="Genome Res.">
        <title>Genome characteristics of facultatively symbiotic Frankia sp. strains reflect host range and host plant biogeography.</title>
        <authorList>
            <person name="Normand P."/>
            <person name="Lapierre P."/>
            <person name="Tisa L.S."/>
            <person name="Gogarten J.P."/>
            <person name="Alloisio N."/>
            <person name="Bagnarol E."/>
            <person name="Bassi C.A."/>
            <person name="Berry A.M."/>
            <person name="Bickhart D.M."/>
            <person name="Choisne N."/>
            <person name="Couloux A."/>
            <person name="Cournoyer B."/>
            <person name="Cruveiller S."/>
            <person name="Daubin V."/>
            <person name="Demange N."/>
            <person name="Francino M.P."/>
            <person name="Goltsman E."/>
            <person name="Huang Y."/>
            <person name="Kopp O.R."/>
            <person name="Labarre L."/>
            <person name="Lapidus A."/>
            <person name="Lavire C."/>
            <person name="Marechal J."/>
            <person name="Martinez M."/>
            <person name="Mastronunzio J.E."/>
            <person name="Mullin B.C."/>
            <person name="Niemann J."/>
            <person name="Pujic P."/>
            <person name="Rawnsley T."/>
            <person name="Rouy Z."/>
            <person name="Schenowitz C."/>
            <person name="Sellstedt A."/>
            <person name="Tavares F."/>
            <person name="Tomkins J.P."/>
            <person name="Vallenet D."/>
            <person name="Valverde C."/>
            <person name="Wall L.G."/>
            <person name="Wang Y."/>
            <person name="Medigue C."/>
            <person name="Benson D.R."/>
        </authorList>
    </citation>
    <scope>NUCLEOTIDE SEQUENCE [LARGE SCALE GENOMIC DNA]</scope>
    <source>
        <strain>DSM 45818 / CECT 9043 / HFP020203 / CcI3</strain>
    </source>
</reference>
<organism>
    <name type="scientific">Frankia casuarinae (strain DSM 45818 / CECT 9043 / HFP020203 / CcI3)</name>
    <dbReference type="NCBI Taxonomy" id="106370"/>
    <lineage>
        <taxon>Bacteria</taxon>
        <taxon>Bacillati</taxon>
        <taxon>Actinomycetota</taxon>
        <taxon>Actinomycetes</taxon>
        <taxon>Frankiales</taxon>
        <taxon>Frankiaceae</taxon>
        <taxon>Frankia</taxon>
    </lineage>
</organism>
<evidence type="ECO:0000255" key="1">
    <source>
        <dbReference type="HAMAP-Rule" id="MF_00033"/>
    </source>
</evidence>
<keyword id="KW-0131">Cell cycle</keyword>
<keyword id="KW-0132">Cell division</keyword>
<keyword id="KW-1003">Cell membrane</keyword>
<keyword id="KW-0133">Cell shape</keyword>
<keyword id="KW-0961">Cell wall biogenesis/degradation</keyword>
<keyword id="KW-0328">Glycosyltransferase</keyword>
<keyword id="KW-0472">Membrane</keyword>
<keyword id="KW-0573">Peptidoglycan synthesis</keyword>
<keyword id="KW-1185">Reference proteome</keyword>
<keyword id="KW-0808">Transferase</keyword>